<proteinExistence type="inferred from homology"/>
<accession>B7HRN2</accession>
<protein>
    <recommendedName>
        <fullName evidence="1">Malate dehydrogenase</fullName>
        <ecNumber evidence="1">1.1.1.37</ecNumber>
    </recommendedName>
</protein>
<organism>
    <name type="scientific">Bacillus cereus (strain AH187)</name>
    <dbReference type="NCBI Taxonomy" id="405534"/>
    <lineage>
        <taxon>Bacteria</taxon>
        <taxon>Bacillati</taxon>
        <taxon>Bacillota</taxon>
        <taxon>Bacilli</taxon>
        <taxon>Bacillales</taxon>
        <taxon>Bacillaceae</taxon>
        <taxon>Bacillus</taxon>
        <taxon>Bacillus cereus group</taxon>
    </lineage>
</organism>
<name>MDH_BACC7</name>
<dbReference type="EC" id="1.1.1.37" evidence="1"/>
<dbReference type="EMBL" id="CP001177">
    <property type="protein sequence ID" value="ACJ82077.1"/>
    <property type="molecule type" value="Genomic_DNA"/>
</dbReference>
<dbReference type="SMR" id="B7HRN2"/>
<dbReference type="KEGG" id="bcr:BCAH187_A4718"/>
<dbReference type="HOGENOM" id="CLU_045401_2_1_9"/>
<dbReference type="Proteomes" id="UP000002214">
    <property type="component" value="Chromosome"/>
</dbReference>
<dbReference type="GO" id="GO:0004459">
    <property type="term" value="F:L-lactate dehydrogenase activity"/>
    <property type="evidence" value="ECO:0007669"/>
    <property type="project" value="TreeGrafter"/>
</dbReference>
<dbReference type="GO" id="GO:0030060">
    <property type="term" value="F:L-malate dehydrogenase (NAD+) activity"/>
    <property type="evidence" value="ECO:0007669"/>
    <property type="project" value="UniProtKB-UniRule"/>
</dbReference>
<dbReference type="GO" id="GO:0006089">
    <property type="term" value="P:lactate metabolic process"/>
    <property type="evidence" value="ECO:0007669"/>
    <property type="project" value="TreeGrafter"/>
</dbReference>
<dbReference type="GO" id="GO:0006099">
    <property type="term" value="P:tricarboxylic acid cycle"/>
    <property type="evidence" value="ECO:0007669"/>
    <property type="project" value="UniProtKB-UniRule"/>
</dbReference>
<dbReference type="CDD" id="cd01339">
    <property type="entry name" value="LDH-like_MDH"/>
    <property type="match status" value="1"/>
</dbReference>
<dbReference type="FunFam" id="3.40.50.720:FF:000018">
    <property type="entry name" value="Malate dehydrogenase"/>
    <property type="match status" value="1"/>
</dbReference>
<dbReference type="FunFam" id="3.90.110.10:FF:000004">
    <property type="entry name" value="Malate dehydrogenase"/>
    <property type="match status" value="1"/>
</dbReference>
<dbReference type="Gene3D" id="3.90.110.10">
    <property type="entry name" value="Lactate dehydrogenase/glycoside hydrolase, family 4, C-terminal"/>
    <property type="match status" value="1"/>
</dbReference>
<dbReference type="Gene3D" id="3.40.50.720">
    <property type="entry name" value="NAD(P)-binding Rossmann-like Domain"/>
    <property type="match status" value="1"/>
</dbReference>
<dbReference type="HAMAP" id="MF_00487">
    <property type="entry name" value="Malate_dehydrog_3"/>
    <property type="match status" value="1"/>
</dbReference>
<dbReference type="InterPro" id="IPR001557">
    <property type="entry name" value="L-lactate/malate_DH"/>
</dbReference>
<dbReference type="InterPro" id="IPR022383">
    <property type="entry name" value="Lactate/malate_DH_C"/>
</dbReference>
<dbReference type="InterPro" id="IPR001236">
    <property type="entry name" value="Lactate/malate_DH_N"/>
</dbReference>
<dbReference type="InterPro" id="IPR015955">
    <property type="entry name" value="Lactate_DH/Glyco_Ohase_4_C"/>
</dbReference>
<dbReference type="InterPro" id="IPR011275">
    <property type="entry name" value="Malate_DH_type3"/>
</dbReference>
<dbReference type="InterPro" id="IPR036291">
    <property type="entry name" value="NAD(P)-bd_dom_sf"/>
</dbReference>
<dbReference type="NCBIfam" id="TIGR01763">
    <property type="entry name" value="MalateDH_bact"/>
    <property type="match status" value="1"/>
</dbReference>
<dbReference type="NCBIfam" id="NF004863">
    <property type="entry name" value="PRK06223.1"/>
    <property type="match status" value="1"/>
</dbReference>
<dbReference type="PANTHER" id="PTHR43128">
    <property type="entry name" value="L-2-HYDROXYCARBOXYLATE DEHYDROGENASE (NAD(P)(+))"/>
    <property type="match status" value="1"/>
</dbReference>
<dbReference type="PANTHER" id="PTHR43128:SF16">
    <property type="entry name" value="L-LACTATE DEHYDROGENASE"/>
    <property type="match status" value="1"/>
</dbReference>
<dbReference type="Pfam" id="PF02866">
    <property type="entry name" value="Ldh_1_C"/>
    <property type="match status" value="1"/>
</dbReference>
<dbReference type="Pfam" id="PF00056">
    <property type="entry name" value="Ldh_1_N"/>
    <property type="match status" value="1"/>
</dbReference>
<dbReference type="PIRSF" id="PIRSF000102">
    <property type="entry name" value="Lac_mal_DH"/>
    <property type="match status" value="1"/>
</dbReference>
<dbReference type="PRINTS" id="PR00086">
    <property type="entry name" value="LLDHDRGNASE"/>
</dbReference>
<dbReference type="SUPFAM" id="SSF56327">
    <property type="entry name" value="LDH C-terminal domain-like"/>
    <property type="match status" value="1"/>
</dbReference>
<dbReference type="SUPFAM" id="SSF51735">
    <property type="entry name" value="NAD(P)-binding Rossmann-fold domains"/>
    <property type="match status" value="1"/>
</dbReference>
<comment type="function">
    <text evidence="1">Catalyzes the reversible oxidation of malate to oxaloacetate.</text>
</comment>
<comment type="catalytic activity">
    <reaction evidence="1">
        <text>(S)-malate + NAD(+) = oxaloacetate + NADH + H(+)</text>
        <dbReference type="Rhea" id="RHEA:21432"/>
        <dbReference type="ChEBI" id="CHEBI:15378"/>
        <dbReference type="ChEBI" id="CHEBI:15589"/>
        <dbReference type="ChEBI" id="CHEBI:16452"/>
        <dbReference type="ChEBI" id="CHEBI:57540"/>
        <dbReference type="ChEBI" id="CHEBI:57945"/>
        <dbReference type="EC" id="1.1.1.37"/>
    </reaction>
</comment>
<comment type="similarity">
    <text evidence="1">Belongs to the LDH/MDH superfamily. MDH type 3 family.</text>
</comment>
<sequence>MTIKRKKVSVIGAGFTGATTAFLLAQKELADVVLVDIPQLENPTKGKALDMLEASPVQGFDANIIGTSDYADTADSDVVVITAGIARKPGMSRDDLVATNSKIMKSITRDIAKHSPNAIIVVLTNPVDAMTYSVFKEAGFPKERVIGQSGVLDTARFRTFIAQELNLSVKDITGFVLGGHGDDMVPLVRYSYAGGIPLETLIPKERLEAIVERTRKGGGEIVGLLGNGSAYYAPAASLVEMTEAILKDQRRVLPAIAYLEGEYGYSDLYLGVPVILGGNGIEKIIELELLADEKEALDRSVESVRNVMKVLV</sequence>
<feature type="chain" id="PRO_1000126124" description="Malate dehydrogenase">
    <location>
        <begin position="1"/>
        <end position="312"/>
    </location>
</feature>
<feature type="active site" description="Proton acceptor" evidence="1">
    <location>
        <position position="180"/>
    </location>
</feature>
<feature type="binding site" evidence="1">
    <location>
        <begin position="12"/>
        <end position="17"/>
    </location>
    <ligand>
        <name>NAD(+)</name>
        <dbReference type="ChEBI" id="CHEBI:57540"/>
    </ligand>
</feature>
<feature type="binding site" evidence="1">
    <location>
        <position position="36"/>
    </location>
    <ligand>
        <name>NAD(+)</name>
        <dbReference type="ChEBI" id="CHEBI:57540"/>
    </ligand>
</feature>
<feature type="binding site" evidence="1">
    <location>
        <position position="87"/>
    </location>
    <ligand>
        <name>substrate</name>
    </ligand>
</feature>
<feature type="binding site" evidence="1">
    <location>
        <position position="93"/>
    </location>
    <ligand>
        <name>substrate</name>
    </ligand>
</feature>
<feature type="binding site" evidence="1">
    <location>
        <position position="100"/>
    </location>
    <ligand>
        <name>NAD(+)</name>
        <dbReference type="ChEBI" id="CHEBI:57540"/>
    </ligand>
</feature>
<feature type="binding site" evidence="1">
    <location>
        <begin position="123"/>
        <end position="125"/>
    </location>
    <ligand>
        <name>NAD(+)</name>
        <dbReference type="ChEBI" id="CHEBI:57540"/>
    </ligand>
</feature>
<feature type="binding site" evidence="1">
    <location>
        <position position="125"/>
    </location>
    <ligand>
        <name>substrate</name>
    </ligand>
</feature>
<feature type="binding site" evidence="1">
    <location>
        <position position="156"/>
    </location>
    <ligand>
        <name>substrate</name>
    </ligand>
</feature>
<feature type="modified residue" description="Phosphoserine" evidence="1">
    <location>
        <position position="149"/>
    </location>
</feature>
<evidence type="ECO:0000255" key="1">
    <source>
        <dbReference type="HAMAP-Rule" id="MF_00487"/>
    </source>
</evidence>
<gene>
    <name evidence="1" type="primary">mdh</name>
    <name type="ordered locus">BCAH187_A4718</name>
</gene>
<keyword id="KW-0520">NAD</keyword>
<keyword id="KW-0560">Oxidoreductase</keyword>
<keyword id="KW-0597">Phosphoprotein</keyword>
<keyword id="KW-0816">Tricarboxylic acid cycle</keyword>
<reference key="1">
    <citation type="submission" date="2008-10" db="EMBL/GenBank/DDBJ databases">
        <title>Genome sequence of Bacillus cereus AH187.</title>
        <authorList>
            <person name="Dodson R.J."/>
            <person name="Durkin A.S."/>
            <person name="Rosovitz M.J."/>
            <person name="Rasko D.A."/>
            <person name="Kolsto A.B."/>
            <person name="Okstad O.A."/>
            <person name="Ravel J."/>
            <person name="Sutton G."/>
        </authorList>
    </citation>
    <scope>NUCLEOTIDE SEQUENCE [LARGE SCALE GENOMIC DNA]</scope>
    <source>
        <strain>AH187</strain>
    </source>
</reference>